<reference key="1">
    <citation type="journal article" date="1998" name="Mol. Biol. Cell">
        <title>The cdr2(+) gene encodes a regulator of G2/M progression and cytokinesis in Schizosaccharomyces pombe.</title>
        <authorList>
            <person name="Breeding C.S."/>
            <person name="Hudson J."/>
            <person name="Balasubramanian M.K."/>
            <person name="Hemmingsen S.M."/>
            <person name="Young P.G."/>
            <person name="Gould K.L."/>
        </authorList>
    </citation>
    <scope>NUCLEOTIDE SEQUENCE [GENOMIC DNA]</scope>
    <scope>FUNCTION</scope>
    <source>
        <strain>972 / ATCC 24843</strain>
    </source>
</reference>
<reference key="2">
    <citation type="journal article" date="2002" name="Nature">
        <title>The genome sequence of Schizosaccharomyces pombe.</title>
        <authorList>
            <person name="Wood V."/>
            <person name="Gwilliam R."/>
            <person name="Rajandream M.A."/>
            <person name="Lyne M.H."/>
            <person name="Lyne R."/>
            <person name="Stewart A."/>
            <person name="Sgouros J.G."/>
            <person name="Peat N."/>
            <person name="Hayles J."/>
            <person name="Baker S.G."/>
            <person name="Basham D."/>
            <person name="Bowman S."/>
            <person name="Brooks K."/>
            <person name="Brown D."/>
            <person name="Brown S."/>
            <person name="Chillingworth T."/>
            <person name="Churcher C.M."/>
            <person name="Collins M."/>
            <person name="Connor R."/>
            <person name="Cronin A."/>
            <person name="Davis P."/>
            <person name="Feltwell T."/>
            <person name="Fraser A."/>
            <person name="Gentles S."/>
            <person name="Goble A."/>
            <person name="Hamlin N."/>
            <person name="Harris D.E."/>
            <person name="Hidalgo J."/>
            <person name="Hodgson G."/>
            <person name="Holroyd S."/>
            <person name="Hornsby T."/>
            <person name="Howarth S."/>
            <person name="Huckle E.J."/>
            <person name="Hunt S."/>
            <person name="Jagels K."/>
            <person name="James K.D."/>
            <person name="Jones L."/>
            <person name="Jones M."/>
            <person name="Leather S."/>
            <person name="McDonald S."/>
            <person name="McLean J."/>
            <person name="Mooney P."/>
            <person name="Moule S."/>
            <person name="Mungall K.L."/>
            <person name="Murphy L.D."/>
            <person name="Niblett D."/>
            <person name="Odell C."/>
            <person name="Oliver K."/>
            <person name="O'Neil S."/>
            <person name="Pearson D."/>
            <person name="Quail M.A."/>
            <person name="Rabbinowitsch E."/>
            <person name="Rutherford K.M."/>
            <person name="Rutter S."/>
            <person name="Saunders D."/>
            <person name="Seeger K."/>
            <person name="Sharp S."/>
            <person name="Skelton J."/>
            <person name="Simmonds M.N."/>
            <person name="Squares R."/>
            <person name="Squares S."/>
            <person name="Stevens K."/>
            <person name="Taylor K."/>
            <person name="Taylor R.G."/>
            <person name="Tivey A."/>
            <person name="Walsh S.V."/>
            <person name="Warren T."/>
            <person name="Whitehead S."/>
            <person name="Woodward J.R."/>
            <person name="Volckaert G."/>
            <person name="Aert R."/>
            <person name="Robben J."/>
            <person name="Grymonprez B."/>
            <person name="Weltjens I."/>
            <person name="Vanstreels E."/>
            <person name="Rieger M."/>
            <person name="Schaefer M."/>
            <person name="Mueller-Auer S."/>
            <person name="Gabel C."/>
            <person name="Fuchs M."/>
            <person name="Duesterhoeft A."/>
            <person name="Fritzc C."/>
            <person name="Holzer E."/>
            <person name="Moestl D."/>
            <person name="Hilbert H."/>
            <person name="Borzym K."/>
            <person name="Langer I."/>
            <person name="Beck A."/>
            <person name="Lehrach H."/>
            <person name="Reinhardt R."/>
            <person name="Pohl T.M."/>
            <person name="Eger P."/>
            <person name="Zimmermann W."/>
            <person name="Wedler H."/>
            <person name="Wambutt R."/>
            <person name="Purnelle B."/>
            <person name="Goffeau A."/>
            <person name="Cadieu E."/>
            <person name="Dreano S."/>
            <person name="Gloux S."/>
            <person name="Lelaure V."/>
            <person name="Mottier S."/>
            <person name="Galibert F."/>
            <person name="Aves S.J."/>
            <person name="Xiang Z."/>
            <person name="Hunt C."/>
            <person name="Moore K."/>
            <person name="Hurst S.M."/>
            <person name="Lucas M."/>
            <person name="Rochet M."/>
            <person name="Gaillardin C."/>
            <person name="Tallada V.A."/>
            <person name="Garzon A."/>
            <person name="Thode G."/>
            <person name="Daga R.R."/>
            <person name="Cruzado L."/>
            <person name="Jimenez J."/>
            <person name="Sanchez M."/>
            <person name="del Rey F."/>
            <person name="Benito J."/>
            <person name="Dominguez A."/>
            <person name="Revuelta J.L."/>
            <person name="Moreno S."/>
            <person name="Armstrong J."/>
            <person name="Forsburg S.L."/>
            <person name="Cerutti L."/>
            <person name="Lowe T."/>
            <person name="McCombie W.R."/>
            <person name="Paulsen I."/>
            <person name="Potashkin J."/>
            <person name="Shpakovski G.V."/>
            <person name="Ussery D."/>
            <person name="Barrell B.G."/>
            <person name="Nurse P."/>
        </authorList>
    </citation>
    <scope>NUCLEOTIDE SEQUENCE [LARGE SCALE GENOMIC DNA]</scope>
    <source>
        <strain>972 / ATCC 24843</strain>
    </source>
</reference>
<reference key="3">
    <citation type="journal article" date="1998" name="Mol. Biol. Cell">
        <title>The protein kinase Cdr2, related to Nim1/Cdr1 mitotic inducer, regulates the onset of mitosis in fission yeast.</title>
        <authorList>
            <person name="Kanoh J."/>
            <person name="Russell P."/>
        </authorList>
    </citation>
    <scope>FUNCTION</scope>
    <scope>AUTOPHOSPHORYLATION</scope>
</reference>
<reference key="4">
    <citation type="journal article" date="2008" name="J. Proteome Res.">
        <title>Phosphoproteome analysis of fission yeast.</title>
        <authorList>
            <person name="Wilson-Grady J.T."/>
            <person name="Villen J."/>
            <person name="Gygi S.P."/>
        </authorList>
    </citation>
    <scope>PHOSPHORYLATION [LARGE SCALE ANALYSIS] AT SER-309; SER-311; SER-476; SER-587 AND SER-632</scope>
    <scope>IDENTIFICATION BY MASS SPECTROMETRY</scope>
</reference>
<reference key="5">
    <citation type="journal article" date="2009" name="Nature">
        <title>A spatial gradient coordinates cell size and mitotic entry in fission yeast.</title>
        <authorList>
            <person name="Moseley J.B."/>
            <person name="Mayeux A."/>
            <person name="Paoletti A."/>
            <person name="Nurse P."/>
        </authorList>
    </citation>
    <scope>SUBCELLULAR LOCATION</scope>
    <scope>FUNCTION</scope>
    <scope>INTERACTION WITH BLT1 AND MID1</scope>
</reference>
<comment type="function">
    <text evidence="5 6 7">Acts as a mitotic inducer. In G2 it negatively regulates wee1, a mitotic inhibitor. Also has a role in cytokinesis where it required for proper septum formation.</text>
</comment>
<comment type="catalytic activity">
    <reaction>
        <text>L-seryl-[protein] + ATP = O-phospho-L-seryl-[protein] + ADP + H(+)</text>
        <dbReference type="Rhea" id="RHEA:17989"/>
        <dbReference type="Rhea" id="RHEA-COMP:9863"/>
        <dbReference type="Rhea" id="RHEA-COMP:11604"/>
        <dbReference type="ChEBI" id="CHEBI:15378"/>
        <dbReference type="ChEBI" id="CHEBI:29999"/>
        <dbReference type="ChEBI" id="CHEBI:30616"/>
        <dbReference type="ChEBI" id="CHEBI:83421"/>
        <dbReference type="ChEBI" id="CHEBI:456216"/>
        <dbReference type="EC" id="2.7.11.1"/>
    </reaction>
</comment>
<comment type="catalytic activity">
    <reaction>
        <text>L-threonyl-[protein] + ATP = O-phospho-L-threonyl-[protein] + ADP + H(+)</text>
        <dbReference type="Rhea" id="RHEA:46608"/>
        <dbReference type="Rhea" id="RHEA-COMP:11060"/>
        <dbReference type="Rhea" id="RHEA-COMP:11605"/>
        <dbReference type="ChEBI" id="CHEBI:15378"/>
        <dbReference type="ChEBI" id="CHEBI:30013"/>
        <dbReference type="ChEBI" id="CHEBI:30616"/>
        <dbReference type="ChEBI" id="CHEBI:61977"/>
        <dbReference type="ChEBI" id="CHEBI:456216"/>
        <dbReference type="EC" id="2.7.11.1"/>
    </reaction>
</comment>
<comment type="subunit">
    <text evidence="5">Interacts with blt1 and mid1.</text>
</comment>
<comment type="interaction">
    <interactant intactId="EBI-4319869">
        <id>P87050</id>
    </interactant>
    <interactant intactId="EBI-4319163">
        <id>Q09690</id>
        <label>pom1</label>
    </interactant>
    <organismsDiffer>false</organismsDiffer>
    <experiments>2</experiments>
</comment>
<comment type="PTM">
    <text evidence="4">Autophosphorylated.</text>
</comment>
<comment type="similarity">
    <text evidence="8">Belongs to the protein kinase superfamily. CAMK Ser/Thr protein kinase family. NIM1 subfamily.</text>
</comment>
<gene>
    <name type="primary">cdr2</name>
    <name type="ORF">SPAC57A10.02</name>
</gene>
<name>CDR2_SCHPO</name>
<evidence type="ECO:0000255" key="1">
    <source>
        <dbReference type="PROSITE-ProRule" id="PRU00159"/>
    </source>
</evidence>
<evidence type="ECO:0000255" key="2">
    <source>
        <dbReference type="PROSITE-ProRule" id="PRU10027"/>
    </source>
</evidence>
<evidence type="ECO:0000256" key="3">
    <source>
        <dbReference type="SAM" id="MobiDB-lite"/>
    </source>
</evidence>
<evidence type="ECO:0000269" key="4">
    <source>
    </source>
</evidence>
<evidence type="ECO:0000269" key="5">
    <source>
    </source>
</evidence>
<evidence type="ECO:0000269" key="6">
    <source>
    </source>
</evidence>
<evidence type="ECO:0000269" key="7">
    <source>
    </source>
</evidence>
<evidence type="ECO:0000305" key="8"/>
<proteinExistence type="evidence at protein level"/>
<organism>
    <name type="scientific">Schizosaccharomyces pombe (strain 972 / ATCC 24843)</name>
    <name type="common">Fission yeast</name>
    <dbReference type="NCBI Taxonomy" id="284812"/>
    <lineage>
        <taxon>Eukaryota</taxon>
        <taxon>Fungi</taxon>
        <taxon>Dikarya</taxon>
        <taxon>Ascomycota</taxon>
        <taxon>Taphrinomycotina</taxon>
        <taxon>Schizosaccharomycetes</taxon>
        <taxon>Schizosaccharomycetales</taxon>
        <taxon>Schizosaccharomycetaceae</taxon>
        <taxon>Schizosaccharomyces</taxon>
    </lineage>
</organism>
<sequence>MSTISEVGPWELGLSLGSGGPNSSRLAKHRETGQLAVVKPIVGWSELTSSQQARIEGELVLLRLIEHPNVLQLIDVISAQEQLFVVVEYMPGGELFDCMLRKGSFTEQDTAKFLWQILCGLEYCHKLHICHRDLKPENLYLDAHGSIKIGEFGMASIQQPGKLLQTSCGSPHYASPEIIMGRSYDGCASDIWSCGIIFFALLTGKLPFDDDNIRSLLLKVCQGQFEMPSNISPQAQHLLYRMLDVDSSTRITMEQIREHPFLSCFVHPNISIPIISAPIQPIDPLIVQHLSLVFRCSDDPMPLYEKLASQSPLVEKTLYTLLSRHLHPPSSAAVDRNRAVVDDLLGTAASNGQQMDEEEIEQAINIPTLAPYPISYAAESVPRPATSASPFLTPVTTSGTFNYSFNATNPQSILQRPATTSSAVPQLPKSVTPGLAYPHDSSMLSSNYRPPSALSPRNFNVSINDPEVQLSRRATSLDMSNDFRMNENDPSIVGNLAASNFPTGMGPPRKRVTSRMSEHTGNRVVSFPRGSAFNPRVTRFNVGNEQFSNNIDNNNYNQPYANATMNNSRRLRTPSGERSMRADLSQSPASYDSLNVPKHRRRQSLFSPSSTKKKLSGSPFQPKRSFLRRLFSSEPSCKCVYASLVASELEHEILEVLRRWQLLGIGIADIIYDSVSASISARIKRQNSLNLKPVRFRISVLAEFFGSQAVFVLESGSSTTFDHLATEFQLIFEDKGFLDNLELSYFQASASRPVSRMSVSSSPFAVFRQRQSVQS</sequence>
<feature type="chain" id="PRO_0000085845" description="Mitosis inducer protein kinase cdr2">
    <location>
        <begin position="1"/>
        <end position="775"/>
    </location>
</feature>
<feature type="domain" description="Protein kinase" evidence="1">
    <location>
        <begin position="10"/>
        <end position="262"/>
    </location>
</feature>
<feature type="region of interest" description="Disordered" evidence="3">
    <location>
        <begin position="549"/>
        <end position="620"/>
    </location>
</feature>
<feature type="compositionally biased region" description="Low complexity" evidence="3">
    <location>
        <begin position="549"/>
        <end position="563"/>
    </location>
</feature>
<feature type="compositionally biased region" description="Polar residues" evidence="3">
    <location>
        <begin position="584"/>
        <end position="593"/>
    </location>
</feature>
<feature type="active site" description="Proton acceptor" evidence="1 2">
    <location>
        <position position="133"/>
    </location>
</feature>
<feature type="binding site" evidence="1">
    <location>
        <begin position="16"/>
        <end position="24"/>
    </location>
    <ligand>
        <name>ATP</name>
        <dbReference type="ChEBI" id="CHEBI:30616"/>
    </ligand>
</feature>
<feature type="binding site" evidence="1">
    <location>
        <position position="39"/>
    </location>
    <ligand>
        <name>ATP</name>
        <dbReference type="ChEBI" id="CHEBI:30616"/>
    </ligand>
</feature>
<feature type="modified residue" description="Phosphoserine" evidence="4">
    <location>
        <position position="309"/>
    </location>
</feature>
<feature type="modified residue" description="Phosphoserine" evidence="4">
    <location>
        <position position="311"/>
    </location>
</feature>
<feature type="modified residue" description="Phosphoserine" evidence="4">
    <location>
        <position position="476"/>
    </location>
</feature>
<feature type="modified residue" description="Phosphoserine" evidence="4">
    <location>
        <position position="587"/>
    </location>
</feature>
<feature type="modified residue" description="Phosphoserine" evidence="4">
    <location>
        <position position="632"/>
    </location>
</feature>
<protein>
    <recommendedName>
        <fullName>Mitosis inducer protein kinase cdr2</fullName>
        <ecNumber>2.7.11.1</ecNumber>
    </recommendedName>
</protein>
<dbReference type="EC" id="2.7.11.1"/>
<dbReference type="EMBL" id="CU329670">
    <property type="protein sequence ID" value="CAB08165.1"/>
    <property type="molecule type" value="Genomic_DNA"/>
</dbReference>
<dbReference type="EMBL" id="AF092508">
    <property type="protein sequence ID" value="AAC72832.1"/>
    <property type="molecule type" value="Genomic_DNA"/>
</dbReference>
<dbReference type="PIR" id="T38929">
    <property type="entry name" value="T38929"/>
</dbReference>
<dbReference type="RefSeq" id="NP_593307.1">
    <property type="nucleotide sequence ID" value="NM_001018737.2"/>
</dbReference>
<dbReference type="SMR" id="P87050"/>
<dbReference type="BioGRID" id="278087">
    <property type="interactions" value="68"/>
</dbReference>
<dbReference type="DIP" id="DIP-59761N"/>
<dbReference type="FunCoup" id="P87050">
    <property type="interactions" value="463"/>
</dbReference>
<dbReference type="IntAct" id="P87050">
    <property type="interactions" value="3"/>
</dbReference>
<dbReference type="STRING" id="284812.P87050"/>
<dbReference type="iPTMnet" id="P87050"/>
<dbReference type="PaxDb" id="4896-SPAC57A10.02.1"/>
<dbReference type="EnsemblFungi" id="SPAC57A10.02.1">
    <property type="protein sequence ID" value="SPAC57A10.02.1:pep"/>
    <property type="gene ID" value="SPAC57A10.02"/>
</dbReference>
<dbReference type="GeneID" id="2541590"/>
<dbReference type="KEGG" id="spo:2541590"/>
<dbReference type="PomBase" id="SPAC57A10.02">
    <property type="gene designation" value="cdr2"/>
</dbReference>
<dbReference type="VEuPathDB" id="FungiDB:SPAC57A10.02"/>
<dbReference type="eggNOG" id="KOG0588">
    <property type="taxonomic scope" value="Eukaryota"/>
</dbReference>
<dbReference type="HOGENOM" id="CLU_019531_0_0_1"/>
<dbReference type="InParanoid" id="P87050"/>
<dbReference type="OMA" id="QAQHLLY"/>
<dbReference type="PhylomeDB" id="P87050"/>
<dbReference type="BRENDA" id="2.7.11.1">
    <property type="organism ID" value="5613"/>
</dbReference>
<dbReference type="PRO" id="PR:P87050"/>
<dbReference type="Proteomes" id="UP000002485">
    <property type="component" value="Chromosome I"/>
</dbReference>
<dbReference type="GO" id="GO:0110115">
    <property type="term" value="C:Cdr2 medial cortical node complex"/>
    <property type="evidence" value="ECO:0000314"/>
    <property type="project" value="PomBase"/>
</dbReference>
<dbReference type="GO" id="GO:0005737">
    <property type="term" value="C:cytoplasm"/>
    <property type="evidence" value="ECO:0000318"/>
    <property type="project" value="GO_Central"/>
</dbReference>
<dbReference type="GO" id="GO:0031097">
    <property type="term" value="C:medial cortex"/>
    <property type="evidence" value="ECO:0000314"/>
    <property type="project" value="PomBase"/>
</dbReference>
<dbReference type="GO" id="GO:0071341">
    <property type="term" value="C:medial cortical node"/>
    <property type="evidence" value="ECO:0000314"/>
    <property type="project" value="PomBase"/>
</dbReference>
<dbReference type="GO" id="GO:0044732">
    <property type="term" value="C:mitotic spindle pole body"/>
    <property type="evidence" value="ECO:0007005"/>
    <property type="project" value="PomBase"/>
</dbReference>
<dbReference type="GO" id="GO:0005634">
    <property type="term" value="C:nucleus"/>
    <property type="evidence" value="ECO:0007005"/>
    <property type="project" value="PomBase"/>
</dbReference>
<dbReference type="GO" id="GO:0005524">
    <property type="term" value="F:ATP binding"/>
    <property type="evidence" value="ECO:0000255"/>
    <property type="project" value="PomBase"/>
</dbReference>
<dbReference type="GO" id="GO:0106310">
    <property type="term" value="F:protein serine kinase activity"/>
    <property type="evidence" value="ECO:0007669"/>
    <property type="project" value="RHEA"/>
</dbReference>
<dbReference type="GO" id="GO:0004674">
    <property type="term" value="F:protein serine/threonine kinase activity"/>
    <property type="evidence" value="ECO:0000316"/>
    <property type="project" value="PomBase"/>
</dbReference>
<dbReference type="GO" id="GO:0043495">
    <property type="term" value="F:protein-membrane adaptor activity"/>
    <property type="evidence" value="ECO:0000269"/>
    <property type="project" value="PomBase"/>
</dbReference>
<dbReference type="GO" id="GO:0035591">
    <property type="term" value="F:signaling adaptor activity"/>
    <property type="evidence" value="ECO:0000269"/>
    <property type="project" value="PomBase"/>
</dbReference>
<dbReference type="GO" id="GO:0051301">
    <property type="term" value="P:cell division"/>
    <property type="evidence" value="ECO:0007669"/>
    <property type="project" value="UniProtKB-KW"/>
</dbReference>
<dbReference type="GO" id="GO:0042149">
    <property type="term" value="P:cellular response to glucose starvation"/>
    <property type="evidence" value="ECO:0000318"/>
    <property type="project" value="GO_Central"/>
</dbReference>
<dbReference type="GO" id="GO:0031569">
    <property type="term" value="P:mitotic G2 cell size control checkpoint signaling"/>
    <property type="evidence" value="ECO:0000315"/>
    <property type="project" value="PomBase"/>
</dbReference>
<dbReference type="GO" id="GO:0010971">
    <property type="term" value="P:positive regulation of G2/M transition of mitotic cell cycle"/>
    <property type="evidence" value="ECO:0000315"/>
    <property type="project" value="PomBase"/>
</dbReference>
<dbReference type="GO" id="GO:0120047">
    <property type="term" value="P:positive regulation of protein localization to medial cortical node"/>
    <property type="evidence" value="ECO:0000269"/>
    <property type="project" value="PomBase"/>
</dbReference>
<dbReference type="GO" id="GO:0051726">
    <property type="term" value="P:regulation of cell cycle"/>
    <property type="evidence" value="ECO:0000318"/>
    <property type="project" value="GO_Central"/>
</dbReference>
<dbReference type="GO" id="GO:0008361">
    <property type="term" value="P:regulation of cell size"/>
    <property type="evidence" value="ECO:0000314"/>
    <property type="project" value="PomBase"/>
</dbReference>
<dbReference type="GO" id="GO:0061387">
    <property type="term" value="P:regulation of extent of cell growth"/>
    <property type="evidence" value="ECO:0000314"/>
    <property type="project" value="PomBase"/>
</dbReference>
<dbReference type="CDD" id="cd12194">
    <property type="entry name" value="Kcc4p_like_C"/>
    <property type="match status" value="1"/>
</dbReference>
<dbReference type="CDD" id="cd14081">
    <property type="entry name" value="STKc_BRSK1_2"/>
    <property type="match status" value="1"/>
</dbReference>
<dbReference type="FunFam" id="1.10.510.10:FF:000571">
    <property type="entry name" value="Maternal embryonic leucine zipper kinase"/>
    <property type="match status" value="1"/>
</dbReference>
<dbReference type="Gene3D" id="3.30.310.220">
    <property type="entry name" value="Fungal kinase associated-1 domain"/>
    <property type="match status" value="1"/>
</dbReference>
<dbReference type="Gene3D" id="1.10.510.10">
    <property type="entry name" value="Transferase(Phosphotransferase) domain 1"/>
    <property type="match status" value="1"/>
</dbReference>
<dbReference type="InterPro" id="IPR031850">
    <property type="entry name" value="Fungal_KA1_dom"/>
</dbReference>
<dbReference type="InterPro" id="IPR043024">
    <property type="entry name" value="KA1_sf_fungal"/>
</dbReference>
<dbReference type="InterPro" id="IPR011009">
    <property type="entry name" value="Kinase-like_dom_sf"/>
</dbReference>
<dbReference type="InterPro" id="IPR000719">
    <property type="entry name" value="Prot_kinase_dom"/>
</dbReference>
<dbReference type="InterPro" id="IPR008271">
    <property type="entry name" value="Ser/Thr_kinase_AS"/>
</dbReference>
<dbReference type="InterPro" id="IPR056275">
    <property type="entry name" value="UBA_Crd2"/>
</dbReference>
<dbReference type="PANTHER" id="PTHR24346">
    <property type="entry name" value="MAP/MICROTUBULE AFFINITY-REGULATING KINASE"/>
    <property type="match status" value="1"/>
</dbReference>
<dbReference type="PANTHER" id="PTHR24346:SF76">
    <property type="entry name" value="NON-SPECIFIC SERINE_THREONINE PROTEIN KINASE"/>
    <property type="match status" value="1"/>
</dbReference>
<dbReference type="Pfam" id="PF16797">
    <property type="entry name" value="Fungal_KA1"/>
    <property type="match status" value="1"/>
</dbReference>
<dbReference type="Pfam" id="PF00069">
    <property type="entry name" value="Pkinase"/>
    <property type="match status" value="1"/>
</dbReference>
<dbReference type="Pfam" id="PF23149">
    <property type="entry name" value="UBA_Crd2"/>
    <property type="match status" value="1"/>
</dbReference>
<dbReference type="SMART" id="SM00220">
    <property type="entry name" value="S_TKc"/>
    <property type="match status" value="1"/>
</dbReference>
<dbReference type="SUPFAM" id="SSF56112">
    <property type="entry name" value="Protein kinase-like (PK-like)"/>
    <property type="match status" value="1"/>
</dbReference>
<dbReference type="PROSITE" id="PS50011">
    <property type="entry name" value="PROTEIN_KINASE_DOM"/>
    <property type="match status" value="1"/>
</dbReference>
<dbReference type="PROSITE" id="PS00108">
    <property type="entry name" value="PROTEIN_KINASE_ST"/>
    <property type="match status" value="1"/>
</dbReference>
<accession>P87050</accession>
<keyword id="KW-0067">ATP-binding</keyword>
<keyword id="KW-0131">Cell cycle</keyword>
<keyword id="KW-0132">Cell division</keyword>
<keyword id="KW-0418">Kinase</keyword>
<keyword id="KW-0498">Mitosis</keyword>
<keyword id="KW-0547">Nucleotide-binding</keyword>
<keyword id="KW-0597">Phosphoprotein</keyword>
<keyword id="KW-1185">Reference proteome</keyword>
<keyword id="KW-0723">Serine/threonine-protein kinase</keyword>
<keyword id="KW-0808">Transferase</keyword>